<name>Y8453_DICDI</name>
<evidence type="ECO:0000256" key="1">
    <source>
        <dbReference type="SAM" id="MobiDB-lite"/>
    </source>
</evidence>
<feature type="chain" id="PRO_0000351267" description="Putative uncharacterized protein DDB_G0283223">
    <location>
        <begin position="1"/>
        <end position="168"/>
    </location>
</feature>
<feature type="region of interest" description="Disordered" evidence="1">
    <location>
        <begin position="1"/>
        <end position="107"/>
    </location>
</feature>
<feature type="compositionally biased region" description="Low complexity" evidence="1">
    <location>
        <begin position="1"/>
        <end position="15"/>
    </location>
</feature>
<feature type="compositionally biased region" description="Acidic residues" evidence="1">
    <location>
        <begin position="33"/>
        <end position="47"/>
    </location>
</feature>
<feature type="compositionally biased region" description="Low complexity" evidence="1">
    <location>
        <begin position="48"/>
        <end position="107"/>
    </location>
</feature>
<proteinExistence type="predicted"/>
<dbReference type="EMBL" id="AAFI02000051">
    <property type="protein sequence ID" value="EAL65850.1"/>
    <property type="molecule type" value="Genomic_DNA"/>
</dbReference>
<dbReference type="RefSeq" id="XP_639178.1">
    <property type="nucleotide sequence ID" value="XM_634086.1"/>
</dbReference>
<dbReference type="PaxDb" id="44689-DDB0218453"/>
<dbReference type="EnsemblProtists" id="EAL65850">
    <property type="protein sequence ID" value="EAL65850"/>
    <property type="gene ID" value="DDB_G0283223"/>
</dbReference>
<dbReference type="GeneID" id="8623954"/>
<dbReference type="KEGG" id="ddi:DDB_G0283223"/>
<dbReference type="HOGENOM" id="CLU_1589461_0_0_1"/>
<dbReference type="InParanoid" id="Q54RG7"/>
<dbReference type="PRO" id="PR:Q54RG7"/>
<dbReference type="Proteomes" id="UP000002195">
    <property type="component" value="Chromosome 4"/>
</dbReference>
<organism>
    <name type="scientific">Dictyostelium discoideum</name>
    <name type="common">Social amoeba</name>
    <dbReference type="NCBI Taxonomy" id="44689"/>
    <lineage>
        <taxon>Eukaryota</taxon>
        <taxon>Amoebozoa</taxon>
        <taxon>Evosea</taxon>
        <taxon>Eumycetozoa</taxon>
        <taxon>Dictyostelia</taxon>
        <taxon>Dictyosteliales</taxon>
        <taxon>Dictyosteliaceae</taxon>
        <taxon>Dictyostelium</taxon>
    </lineage>
</organism>
<keyword id="KW-1185">Reference proteome</keyword>
<accession>Q54RG7</accession>
<gene>
    <name type="ORF">DDB_G0283223</name>
</gene>
<sequence length="168" mass="18536">MKRIISSSKSLKQLSNIGYGSKKQIHCKSVVDSDSDSDSDSDSDSDSDSNSNSNSNSNSNSNSNSNSNSNSNSNNNNNNTNNNNNNNNNNNNNNNNNNNNNNNNNNNNNSVFSELILKLIAERVILINNYNIEKIEEIKGIPELMKSITSTTAETKNNYYSGSYYSSR</sequence>
<protein>
    <recommendedName>
        <fullName>Putative uncharacterized protein DDB_G0283223</fullName>
    </recommendedName>
</protein>
<reference key="1">
    <citation type="journal article" date="2005" name="Nature">
        <title>The genome of the social amoeba Dictyostelium discoideum.</title>
        <authorList>
            <person name="Eichinger L."/>
            <person name="Pachebat J.A."/>
            <person name="Gloeckner G."/>
            <person name="Rajandream M.A."/>
            <person name="Sucgang R."/>
            <person name="Berriman M."/>
            <person name="Song J."/>
            <person name="Olsen R."/>
            <person name="Szafranski K."/>
            <person name="Xu Q."/>
            <person name="Tunggal B."/>
            <person name="Kummerfeld S."/>
            <person name="Madera M."/>
            <person name="Konfortov B.A."/>
            <person name="Rivero F."/>
            <person name="Bankier A.T."/>
            <person name="Lehmann R."/>
            <person name="Hamlin N."/>
            <person name="Davies R."/>
            <person name="Gaudet P."/>
            <person name="Fey P."/>
            <person name="Pilcher K."/>
            <person name="Chen G."/>
            <person name="Saunders D."/>
            <person name="Sodergren E.J."/>
            <person name="Davis P."/>
            <person name="Kerhornou A."/>
            <person name="Nie X."/>
            <person name="Hall N."/>
            <person name="Anjard C."/>
            <person name="Hemphill L."/>
            <person name="Bason N."/>
            <person name="Farbrother P."/>
            <person name="Desany B."/>
            <person name="Just E."/>
            <person name="Morio T."/>
            <person name="Rost R."/>
            <person name="Churcher C.M."/>
            <person name="Cooper J."/>
            <person name="Haydock S."/>
            <person name="van Driessche N."/>
            <person name="Cronin A."/>
            <person name="Goodhead I."/>
            <person name="Muzny D.M."/>
            <person name="Mourier T."/>
            <person name="Pain A."/>
            <person name="Lu M."/>
            <person name="Harper D."/>
            <person name="Lindsay R."/>
            <person name="Hauser H."/>
            <person name="James K.D."/>
            <person name="Quiles M."/>
            <person name="Madan Babu M."/>
            <person name="Saito T."/>
            <person name="Buchrieser C."/>
            <person name="Wardroper A."/>
            <person name="Felder M."/>
            <person name="Thangavelu M."/>
            <person name="Johnson D."/>
            <person name="Knights A."/>
            <person name="Loulseged H."/>
            <person name="Mungall K.L."/>
            <person name="Oliver K."/>
            <person name="Price C."/>
            <person name="Quail M.A."/>
            <person name="Urushihara H."/>
            <person name="Hernandez J."/>
            <person name="Rabbinowitsch E."/>
            <person name="Steffen D."/>
            <person name="Sanders M."/>
            <person name="Ma J."/>
            <person name="Kohara Y."/>
            <person name="Sharp S."/>
            <person name="Simmonds M.N."/>
            <person name="Spiegler S."/>
            <person name="Tivey A."/>
            <person name="Sugano S."/>
            <person name="White B."/>
            <person name="Walker D."/>
            <person name="Woodward J.R."/>
            <person name="Winckler T."/>
            <person name="Tanaka Y."/>
            <person name="Shaulsky G."/>
            <person name="Schleicher M."/>
            <person name="Weinstock G.M."/>
            <person name="Rosenthal A."/>
            <person name="Cox E.C."/>
            <person name="Chisholm R.L."/>
            <person name="Gibbs R.A."/>
            <person name="Loomis W.F."/>
            <person name="Platzer M."/>
            <person name="Kay R.R."/>
            <person name="Williams J.G."/>
            <person name="Dear P.H."/>
            <person name="Noegel A.A."/>
            <person name="Barrell B.G."/>
            <person name="Kuspa A."/>
        </authorList>
    </citation>
    <scope>NUCLEOTIDE SEQUENCE [LARGE SCALE GENOMIC DNA]</scope>
    <source>
        <strain>AX4</strain>
    </source>
</reference>